<dbReference type="EC" id="4.2.1.59" evidence="1"/>
<dbReference type="EMBL" id="CP000437">
    <property type="protein sequence ID" value="ABI82513.1"/>
    <property type="molecule type" value="Genomic_DNA"/>
</dbReference>
<dbReference type="RefSeq" id="WP_003014877.1">
    <property type="nucleotide sequence ID" value="NC_017463.1"/>
</dbReference>
<dbReference type="SMR" id="Q0BN21"/>
<dbReference type="GeneID" id="75264783"/>
<dbReference type="KEGG" id="fth:FTH_0540"/>
<dbReference type="GO" id="GO:0005737">
    <property type="term" value="C:cytoplasm"/>
    <property type="evidence" value="ECO:0007669"/>
    <property type="project" value="UniProtKB-SubCell"/>
</dbReference>
<dbReference type="GO" id="GO:0016020">
    <property type="term" value="C:membrane"/>
    <property type="evidence" value="ECO:0007669"/>
    <property type="project" value="GOC"/>
</dbReference>
<dbReference type="GO" id="GO:0019171">
    <property type="term" value="F:(3R)-hydroxyacyl-[acyl-carrier-protein] dehydratase activity"/>
    <property type="evidence" value="ECO:0007669"/>
    <property type="project" value="UniProtKB-EC"/>
</dbReference>
<dbReference type="GO" id="GO:0006633">
    <property type="term" value="P:fatty acid biosynthetic process"/>
    <property type="evidence" value="ECO:0007669"/>
    <property type="project" value="UniProtKB-UniRule"/>
</dbReference>
<dbReference type="GO" id="GO:0009245">
    <property type="term" value="P:lipid A biosynthetic process"/>
    <property type="evidence" value="ECO:0007669"/>
    <property type="project" value="UniProtKB-UniRule"/>
</dbReference>
<dbReference type="CDD" id="cd01288">
    <property type="entry name" value="FabZ"/>
    <property type="match status" value="1"/>
</dbReference>
<dbReference type="FunFam" id="3.10.129.10:FF:000001">
    <property type="entry name" value="3-hydroxyacyl-[acyl-carrier-protein] dehydratase FabZ"/>
    <property type="match status" value="1"/>
</dbReference>
<dbReference type="Gene3D" id="3.10.129.10">
    <property type="entry name" value="Hotdog Thioesterase"/>
    <property type="match status" value="1"/>
</dbReference>
<dbReference type="HAMAP" id="MF_00406">
    <property type="entry name" value="FabZ"/>
    <property type="match status" value="1"/>
</dbReference>
<dbReference type="InterPro" id="IPR013114">
    <property type="entry name" value="FabA_FabZ"/>
</dbReference>
<dbReference type="InterPro" id="IPR010084">
    <property type="entry name" value="FabZ"/>
</dbReference>
<dbReference type="InterPro" id="IPR029069">
    <property type="entry name" value="HotDog_dom_sf"/>
</dbReference>
<dbReference type="NCBIfam" id="TIGR01750">
    <property type="entry name" value="fabZ"/>
    <property type="match status" value="1"/>
</dbReference>
<dbReference type="NCBIfam" id="NF000582">
    <property type="entry name" value="PRK00006.1"/>
    <property type="match status" value="1"/>
</dbReference>
<dbReference type="PANTHER" id="PTHR30272">
    <property type="entry name" value="3-HYDROXYACYL-[ACYL-CARRIER-PROTEIN] DEHYDRATASE"/>
    <property type="match status" value="1"/>
</dbReference>
<dbReference type="PANTHER" id="PTHR30272:SF1">
    <property type="entry name" value="3-HYDROXYACYL-[ACYL-CARRIER-PROTEIN] DEHYDRATASE"/>
    <property type="match status" value="1"/>
</dbReference>
<dbReference type="Pfam" id="PF07977">
    <property type="entry name" value="FabA"/>
    <property type="match status" value="1"/>
</dbReference>
<dbReference type="SUPFAM" id="SSF54637">
    <property type="entry name" value="Thioesterase/thiol ester dehydrase-isomerase"/>
    <property type="match status" value="1"/>
</dbReference>
<comment type="function">
    <text evidence="1">Involved in unsaturated fatty acids biosynthesis. Catalyzes the dehydration of short chain beta-hydroxyacyl-ACPs and long chain saturated and unsaturated beta-hydroxyacyl-ACPs.</text>
</comment>
<comment type="catalytic activity">
    <reaction evidence="1">
        <text>a (3R)-hydroxyacyl-[ACP] = a (2E)-enoyl-[ACP] + H2O</text>
        <dbReference type="Rhea" id="RHEA:13097"/>
        <dbReference type="Rhea" id="RHEA-COMP:9925"/>
        <dbReference type="Rhea" id="RHEA-COMP:9945"/>
        <dbReference type="ChEBI" id="CHEBI:15377"/>
        <dbReference type="ChEBI" id="CHEBI:78784"/>
        <dbReference type="ChEBI" id="CHEBI:78827"/>
        <dbReference type="EC" id="4.2.1.59"/>
    </reaction>
</comment>
<comment type="subcellular location">
    <subcellularLocation>
        <location evidence="1">Cytoplasm</location>
    </subcellularLocation>
</comment>
<comment type="similarity">
    <text evidence="1">Belongs to the thioester dehydratase family. FabZ subfamily.</text>
</comment>
<protein>
    <recommendedName>
        <fullName evidence="1">3-hydroxyacyl-[acyl-carrier-protein] dehydratase FabZ</fullName>
        <ecNumber evidence="1">4.2.1.59</ecNumber>
    </recommendedName>
    <alternativeName>
        <fullName evidence="1">(3R)-hydroxymyristoyl-[acyl-carrier-protein] dehydratase</fullName>
        <shortName evidence="1">(3R)-hydroxymyristoyl-ACP dehydrase</shortName>
    </alternativeName>
    <alternativeName>
        <fullName evidence="1">Beta-hydroxyacyl-ACP dehydratase</fullName>
    </alternativeName>
</protein>
<sequence>MSQFNQNNKQIDVMGIRKILPHRYPFALLDKIVDWSVEDRTIVAQKNVTINEDFFNGHFPDFPVMPGVLIVEAMAQATAILGELMAETLFAHVVEKAGGGRRTFMLAGIDKVRVKRPVVPGDVLVIESRMVKQKNIICTAESVAKVDGQIVCSAELMAAYKDY</sequence>
<accession>Q0BN21</accession>
<organism>
    <name type="scientific">Francisella tularensis subsp. holarctica (strain OSU18)</name>
    <dbReference type="NCBI Taxonomy" id="393011"/>
    <lineage>
        <taxon>Bacteria</taxon>
        <taxon>Pseudomonadati</taxon>
        <taxon>Pseudomonadota</taxon>
        <taxon>Gammaproteobacteria</taxon>
        <taxon>Thiotrichales</taxon>
        <taxon>Francisellaceae</taxon>
        <taxon>Francisella</taxon>
    </lineage>
</organism>
<reference key="1">
    <citation type="journal article" date="2006" name="J. Bacteriol.">
        <title>Chromosome rearrangement and diversification of Francisella tularensis revealed by the type B (OSU18) genome sequence.</title>
        <authorList>
            <person name="Petrosino J.F."/>
            <person name="Xiang Q."/>
            <person name="Karpathy S.E."/>
            <person name="Jiang H."/>
            <person name="Yerrapragada S."/>
            <person name="Liu Y."/>
            <person name="Gioia J."/>
            <person name="Hemphill L."/>
            <person name="Gonzalez A."/>
            <person name="Raghavan T.M."/>
            <person name="Uzman A."/>
            <person name="Fox G.E."/>
            <person name="Highlander S."/>
            <person name="Reichard M."/>
            <person name="Morton R.J."/>
            <person name="Clinkenbeard K.D."/>
            <person name="Weinstock G.M."/>
        </authorList>
    </citation>
    <scope>NUCLEOTIDE SEQUENCE [LARGE SCALE GENOMIC DNA]</scope>
    <source>
        <strain>OSU18</strain>
    </source>
</reference>
<proteinExistence type="inferred from homology"/>
<gene>
    <name evidence="1" type="primary">fabZ</name>
    <name type="ordered locus">FTH_0540</name>
</gene>
<feature type="chain" id="PRO_0000301893" description="3-hydroxyacyl-[acyl-carrier-protein] dehydratase FabZ">
    <location>
        <begin position="1"/>
        <end position="163"/>
    </location>
</feature>
<feature type="active site" evidence="1">
    <location>
        <position position="58"/>
    </location>
</feature>
<name>FABZ_FRATO</name>
<keyword id="KW-0963">Cytoplasm</keyword>
<keyword id="KW-0441">Lipid A biosynthesis</keyword>
<keyword id="KW-0444">Lipid biosynthesis</keyword>
<keyword id="KW-0443">Lipid metabolism</keyword>
<keyword id="KW-0456">Lyase</keyword>
<evidence type="ECO:0000255" key="1">
    <source>
        <dbReference type="HAMAP-Rule" id="MF_00406"/>
    </source>
</evidence>